<dbReference type="EC" id="4.1.2.13" evidence="1"/>
<dbReference type="EMBL" id="AE009951">
    <property type="protein sequence ID" value="AAL94528.1"/>
    <property type="molecule type" value="Genomic_DNA"/>
</dbReference>
<dbReference type="RefSeq" id="NP_603229.1">
    <property type="nucleotide sequence ID" value="NC_003454.1"/>
</dbReference>
<dbReference type="RefSeq" id="WP_005901613.1">
    <property type="nucleotide sequence ID" value="NZ_OZ209243.1"/>
</dbReference>
<dbReference type="SMR" id="Q8RGH3"/>
<dbReference type="STRING" id="190304.FN0322"/>
<dbReference type="PaxDb" id="190304-FN0322"/>
<dbReference type="EnsemblBacteria" id="AAL94528">
    <property type="protein sequence ID" value="AAL94528"/>
    <property type="gene ID" value="FN0322"/>
</dbReference>
<dbReference type="KEGG" id="fnu:FN0322"/>
<dbReference type="PATRIC" id="fig|190304.8.peg.902"/>
<dbReference type="eggNOG" id="COG3588">
    <property type="taxonomic scope" value="Bacteria"/>
</dbReference>
<dbReference type="HOGENOM" id="CLU_081560_0_0_0"/>
<dbReference type="InParanoid" id="Q8RGH3"/>
<dbReference type="BioCyc" id="FNUC190304:G1FZS-919-MONOMER"/>
<dbReference type="UniPathway" id="UPA00109">
    <property type="reaction ID" value="UER00183"/>
</dbReference>
<dbReference type="Proteomes" id="UP000002521">
    <property type="component" value="Chromosome"/>
</dbReference>
<dbReference type="GO" id="GO:0004332">
    <property type="term" value="F:fructose-bisphosphate aldolase activity"/>
    <property type="evidence" value="ECO:0007669"/>
    <property type="project" value="UniProtKB-UniRule"/>
</dbReference>
<dbReference type="GO" id="GO:0006096">
    <property type="term" value="P:glycolytic process"/>
    <property type="evidence" value="ECO:0007669"/>
    <property type="project" value="UniProtKB-UniRule"/>
</dbReference>
<dbReference type="Gene3D" id="3.20.20.70">
    <property type="entry name" value="Aldolase class I"/>
    <property type="match status" value="1"/>
</dbReference>
<dbReference type="HAMAP" id="MF_00729">
    <property type="entry name" value="FBP_aldolase_1"/>
    <property type="match status" value="1"/>
</dbReference>
<dbReference type="InterPro" id="IPR013785">
    <property type="entry name" value="Aldolase_TIM"/>
</dbReference>
<dbReference type="InterPro" id="IPR000741">
    <property type="entry name" value="FBA_I"/>
</dbReference>
<dbReference type="InterPro" id="IPR023014">
    <property type="entry name" value="FBA_I_Gram+-type"/>
</dbReference>
<dbReference type="NCBIfam" id="NF003784">
    <property type="entry name" value="PRK05377.1"/>
    <property type="match status" value="1"/>
</dbReference>
<dbReference type="PANTHER" id="PTHR11627">
    <property type="entry name" value="FRUCTOSE-BISPHOSPHATE ALDOLASE"/>
    <property type="match status" value="1"/>
</dbReference>
<dbReference type="Pfam" id="PF00274">
    <property type="entry name" value="Glycolytic"/>
    <property type="match status" value="1"/>
</dbReference>
<dbReference type="SUPFAM" id="SSF51569">
    <property type="entry name" value="Aldolase"/>
    <property type="match status" value="1"/>
</dbReference>
<accession>Q8RGH3</accession>
<reference key="1">
    <citation type="journal article" date="2002" name="J. Bacteriol.">
        <title>Genome sequence and analysis of the oral bacterium Fusobacterium nucleatum strain ATCC 25586.</title>
        <authorList>
            <person name="Kapatral V."/>
            <person name="Anderson I."/>
            <person name="Ivanova N."/>
            <person name="Reznik G."/>
            <person name="Los T."/>
            <person name="Lykidis A."/>
            <person name="Bhattacharyya A."/>
            <person name="Bartman A."/>
            <person name="Gardner W."/>
            <person name="Grechkin G."/>
            <person name="Zhu L."/>
            <person name="Vasieva O."/>
            <person name="Chu L."/>
            <person name="Kogan Y."/>
            <person name="Chaga O."/>
            <person name="Goltsman E."/>
            <person name="Bernal A."/>
            <person name="Larsen N."/>
            <person name="D'Souza M."/>
            <person name="Walunas T."/>
            <person name="Pusch G."/>
            <person name="Haselkorn R."/>
            <person name="Fonstein M."/>
            <person name="Kyrpides N.C."/>
            <person name="Overbeek R."/>
        </authorList>
    </citation>
    <scope>NUCLEOTIDE SEQUENCE [LARGE SCALE GENOMIC DNA]</scope>
    <source>
        <strain>ATCC 25586 / DSM 15643 / BCRC 10681 / CIP 101130 / JCM 8532 / KCTC 2640 / LMG 13131 / VPI 4355</strain>
    </source>
</reference>
<sequence length="295" mass="32896">MNEKLEKMRNGKGFIAALDQSGGSTPKALKLYGVNENEYSNDKEMFDLIHKMRTRIIKSPAFNESKILGAILFEQTMDSKIDGKYTADFLWEEKKVLPFLKIDKGLNDLDADGVQTMKPNPTLADLLKRANERHIFGTKMRSVIKKASPAGIARVVEQQFEVAAQVVAAGLIPIIEPEVDINNVDKVQCEEILRDEIRKHLNALPETSNVMLKLTLPTVENLYEEFTKHPRVVRVVALSGGYSREKANDILSKNKGVIASFSRALTEGLSAQQTDEEFNKTLAASIDGIYEASVK</sequence>
<organism>
    <name type="scientific">Fusobacterium nucleatum subsp. nucleatum (strain ATCC 25586 / DSM 15643 / BCRC 10681 / CIP 101130 / JCM 8532 / KCTC 2640 / LMG 13131 / VPI 4355)</name>
    <dbReference type="NCBI Taxonomy" id="190304"/>
    <lineage>
        <taxon>Bacteria</taxon>
        <taxon>Fusobacteriati</taxon>
        <taxon>Fusobacteriota</taxon>
        <taxon>Fusobacteriia</taxon>
        <taxon>Fusobacteriales</taxon>
        <taxon>Fusobacteriaceae</taxon>
        <taxon>Fusobacterium</taxon>
    </lineage>
</organism>
<keyword id="KW-0324">Glycolysis</keyword>
<keyword id="KW-0456">Lyase</keyword>
<keyword id="KW-1185">Reference proteome</keyword>
<keyword id="KW-0704">Schiff base</keyword>
<gene>
    <name evidence="1" type="primary">fda</name>
    <name type="ordered locus">FN0322</name>
</gene>
<feature type="chain" id="PRO_0000216900" description="Fructose-bisphosphate aldolase class 1">
    <location>
        <begin position="1"/>
        <end position="295"/>
    </location>
</feature>
<feature type="active site" description="Proton acceptor" evidence="1">
    <location>
        <position position="176"/>
    </location>
</feature>
<feature type="active site" description="Schiff-base intermediate with dihydroxyacetone-P" evidence="1">
    <location>
        <position position="213"/>
    </location>
</feature>
<protein>
    <recommendedName>
        <fullName evidence="1">Fructose-bisphosphate aldolase class 1</fullName>
        <ecNumber evidence="1">4.1.2.13</ecNumber>
    </recommendedName>
    <alternativeName>
        <fullName>Fructose-bisphosphate aldolase class I</fullName>
        <shortName evidence="1">FBP aldolase</shortName>
    </alternativeName>
</protein>
<name>ALF1_FUSNN</name>
<proteinExistence type="inferred from homology"/>
<evidence type="ECO:0000255" key="1">
    <source>
        <dbReference type="HAMAP-Rule" id="MF_00729"/>
    </source>
</evidence>
<comment type="catalytic activity">
    <reaction evidence="1">
        <text>beta-D-fructose 1,6-bisphosphate = D-glyceraldehyde 3-phosphate + dihydroxyacetone phosphate</text>
        <dbReference type="Rhea" id="RHEA:14729"/>
        <dbReference type="ChEBI" id="CHEBI:32966"/>
        <dbReference type="ChEBI" id="CHEBI:57642"/>
        <dbReference type="ChEBI" id="CHEBI:59776"/>
        <dbReference type="EC" id="4.1.2.13"/>
    </reaction>
</comment>
<comment type="pathway">
    <text evidence="1">Carbohydrate degradation; glycolysis; D-glyceraldehyde 3-phosphate and glycerone phosphate from D-glucose: step 4/4.</text>
</comment>
<comment type="similarity">
    <text evidence="1">Belongs to the class I fructose-bisphosphate aldolase family.</text>
</comment>